<dbReference type="EMBL" id="CP000023">
    <property type="protein sequence ID" value="AAV59802.1"/>
    <property type="molecule type" value="Genomic_DNA"/>
</dbReference>
<dbReference type="RefSeq" id="WP_002944541.1">
    <property type="nucleotide sequence ID" value="NC_006448.1"/>
</dbReference>
<dbReference type="SMR" id="Q5M6G5"/>
<dbReference type="STRING" id="264199.stu0073"/>
<dbReference type="GeneID" id="66898004"/>
<dbReference type="KEGG" id="stl:stu0073"/>
<dbReference type="eggNOG" id="COG0052">
    <property type="taxonomic scope" value="Bacteria"/>
</dbReference>
<dbReference type="HOGENOM" id="CLU_040318_1_2_9"/>
<dbReference type="Proteomes" id="UP000001170">
    <property type="component" value="Chromosome"/>
</dbReference>
<dbReference type="GO" id="GO:0022627">
    <property type="term" value="C:cytosolic small ribosomal subunit"/>
    <property type="evidence" value="ECO:0007669"/>
    <property type="project" value="TreeGrafter"/>
</dbReference>
<dbReference type="GO" id="GO:0003735">
    <property type="term" value="F:structural constituent of ribosome"/>
    <property type="evidence" value="ECO:0007669"/>
    <property type="project" value="InterPro"/>
</dbReference>
<dbReference type="GO" id="GO:0006412">
    <property type="term" value="P:translation"/>
    <property type="evidence" value="ECO:0007669"/>
    <property type="project" value="UniProtKB-UniRule"/>
</dbReference>
<dbReference type="CDD" id="cd01425">
    <property type="entry name" value="RPS2"/>
    <property type="match status" value="1"/>
</dbReference>
<dbReference type="FunFam" id="1.10.287.610:FF:000001">
    <property type="entry name" value="30S ribosomal protein S2"/>
    <property type="match status" value="1"/>
</dbReference>
<dbReference type="Gene3D" id="3.40.50.10490">
    <property type="entry name" value="Glucose-6-phosphate isomerase like protein, domain 1"/>
    <property type="match status" value="1"/>
</dbReference>
<dbReference type="Gene3D" id="1.10.287.610">
    <property type="entry name" value="Helix hairpin bin"/>
    <property type="match status" value="1"/>
</dbReference>
<dbReference type="HAMAP" id="MF_00291_B">
    <property type="entry name" value="Ribosomal_uS2_B"/>
    <property type="match status" value="1"/>
</dbReference>
<dbReference type="InterPro" id="IPR001865">
    <property type="entry name" value="Ribosomal_uS2"/>
</dbReference>
<dbReference type="InterPro" id="IPR005706">
    <property type="entry name" value="Ribosomal_uS2_bac/mit/plastid"/>
</dbReference>
<dbReference type="InterPro" id="IPR018130">
    <property type="entry name" value="Ribosomal_uS2_CS"/>
</dbReference>
<dbReference type="InterPro" id="IPR023591">
    <property type="entry name" value="Ribosomal_uS2_flav_dom_sf"/>
</dbReference>
<dbReference type="NCBIfam" id="TIGR01011">
    <property type="entry name" value="rpsB_bact"/>
    <property type="match status" value="1"/>
</dbReference>
<dbReference type="PANTHER" id="PTHR12534">
    <property type="entry name" value="30S RIBOSOMAL PROTEIN S2 PROKARYOTIC AND ORGANELLAR"/>
    <property type="match status" value="1"/>
</dbReference>
<dbReference type="PANTHER" id="PTHR12534:SF0">
    <property type="entry name" value="SMALL RIBOSOMAL SUBUNIT PROTEIN US2M"/>
    <property type="match status" value="1"/>
</dbReference>
<dbReference type="Pfam" id="PF00318">
    <property type="entry name" value="Ribosomal_S2"/>
    <property type="match status" value="1"/>
</dbReference>
<dbReference type="PRINTS" id="PR00395">
    <property type="entry name" value="RIBOSOMALS2"/>
</dbReference>
<dbReference type="SUPFAM" id="SSF52313">
    <property type="entry name" value="Ribosomal protein S2"/>
    <property type="match status" value="1"/>
</dbReference>
<dbReference type="PROSITE" id="PS00962">
    <property type="entry name" value="RIBOSOMAL_S2_1"/>
    <property type="match status" value="1"/>
</dbReference>
<feature type="chain" id="PRO_1000004095" description="Small ribosomal subunit protein uS2">
    <location>
        <begin position="1"/>
        <end position="255"/>
    </location>
</feature>
<evidence type="ECO:0000255" key="1">
    <source>
        <dbReference type="HAMAP-Rule" id="MF_00291"/>
    </source>
</evidence>
<evidence type="ECO:0000305" key="2"/>
<reference key="1">
    <citation type="journal article" date="2004" name="Nat. Biotechnol.">
        <title>Complete sequence and comparative genome analysis of the dairy bacterium Streptococcus thermophilus.</title>
        <authorList>
            <person name="Bolotin A."/>
            <person name="Quinquis B."/>
            <person name="Renault P."/>
            <person name="Sorokin A."/>
            <person name="Ehrlich S.D."/>
            <person name="Kulakauskas S."/>
            <person name="Lapidus A."/>
            <person name="Goltsman E."/>
            <person name="Mazur M."/>
            <person name="Pusch G.D."/>
            <person name="Fonstein M."/>
            <person name="Overbeek R."/>
            <person name="Kyprides N."/>
            <person name="Purnelle B."/>
            <person name="Prozzi D."/>
            <person name="Ngui K."/>
            <person name="Masuy D."/>
            <person name="Hancy F."/>
            <person name="Burteau S."/>
            <person name="Boutry M."/>
            <person name="Delcour J."/>
            <person name="Goffeau A."/>
            <person name="Hols P."/>
        </authorList>
    </citation>
    <scope>NUCLEOTIDE SEQUENCE [LARGE SCALE GENOMIC DNA]</scope>
    <source>
        <strain>ATCC BAA-250 / LMG 18311</strain>
    </source>
</reference>
<organism>
    <name type="scientific">Streptococcus thermophilus (strain ATCC BAA-250 / LMG 18311)</name>
    <dbReference type="NCBI Taxonomy" id="264199"/>
    <lineage>
        <taxon>Bacteria</taxon>
        <taxon>Bacillati</taxon>
        <taxon>Bacillota</taxon>
        <taxon>Bacilli</taxon>
        <taxon>Lactobacillales</taxon>
        <taxon>Streptococcaceae</taxon>
        <taxon>Streptococcus</taxon>
    </lineage>
</organism>
<keyword id="KW-1185">Reference proteome</keyword>
<keyword id="KW-0687">Ribonucleoprotein</keyword>
<keyword id="KW-0689">Ribosomal protein</keyword>
<comment type="similarity">
    <text evidence="1">Belongs to the universal ribosomal protein uS2 family.</text>
</comment>
<name>RS2_STRT2</name>
<gene>
    <name evidence="1" type="primary">rpsB</name>
    <name type="ordered locus">stu0073</name>
</gene>
<accession>Q5M6G5</accession>
<sequence>MAVISMKQLLEAGVHFGHQTRRWNPKMAKYIFTERNGIHVIDLQQTVKMVDTAYEFVREAAANDAVILFVGTKKQAAEAVAEEATRAGQYYINHRWLGGTLTNWNTIKKRIARLKEIKQMEADGTFEVLPKKEVALLNKQRARLEKFLGGIEDMPRIPDVIYIVDPHKEQIAVKEAKKLGIPVVAMVDTNADPDEIDVIIPANDDAIRAVKLITSKMADAIIEGNQGEDASADFQEAAAADSIEEIVEVVEGDNN</sequence>
<protein>
    <recommendedName>
        <fullName evidence="1">Small ribosomal subunit protein uS2</fullName>
    </recommendedName>
    <alternativeName>
        <fullName evidence="2">30S ribosomal protein S2</fullName>
    </alternativeName>
</protein>
<proteinExistence type="inferred from homology"/>